<accession>Q8WXQ3</accession>
<protein>
    <recommendedName>
        <fullName evidence="1">Putative uncharacterized protein encoded by LINC01599</fullName>
    </recommendedName>
</protein>
<organism>
    <name type="scientific">Homo sapiens</name>
    <name type="common">Human</name>
    <dbReference type="NCBI Taxonomy" id="9606"/>
    <lineage>
        <taxon>Eukaryota</taxon>
        <taxon>Metazoa</taxon>
        <taxon>Chordata</taxon>
        <taxon>Craniata</taxon>
        <taxon>Vertebrata</taxon>
        <taxon>Euteleostomi</taxon>
        <taxon>Mammalia</taxon>
        <taxon>Eutheria</taxon>
        <taxon>Euarchontoglires</taxon>
        <taxon>Primates</taxon>
        <taxon>Haplorrhini</taxon>
        <taxon>Catarrhini</taxon>
        <taxon>Hominidae</taxon>
        <taxon>Homo</taxon>
    </lineage>
</organism>
<evidence type="ECO:0000312" key="1">
    <source>
        <dbReference type="HGNC" id="HGNC:27285"/>
    </source>
</evidence>
<reference key="1">
    <citation type="submission" date="2001-06" db="EMBL/GenBank/DDBJ databases">
        <authorList>
            <person name="Hu W.-X."/>
            <person name="Tang L.-J."/>
            <person name="Shi Y.-W."/>
        </authorList>
    </citation>
    <scope>NUCLEOTIDE SEQUENCE [MRNA]</scope>
</reference>
<reference key="2">
    <citation type="journal article" date="2003" name="Nature">
        <title>The DNA sequence and analysis of human chromosome 14.</title>
        <authorList>
            <person name="Heilig R."/>
            <person name="Eckenberg R."/>
            <person name="Petit J.-L."/>
            <person name="Fonknechten N."/>
            <person name="Da Silva C."/>
            <person name="Cattolico L."/>
            <person name="Levy M."/>
            <person name="Barbe V."/>
            <person name="De Berardinis V."/>
            <person name="Ureta-Vidal A."/>
            <person name="Pelletier E."/>
            <person name="Vico V."/>
            <person name="Anthouard V."/>
            <person name="Rowen L."/>
            <person name="Madan A."/>
            <person name="Qin S."/>
            <person name="Sun H."/>
            <person name="Du H."/>
            <person name="Pepin K."/>
            <person name="Artiguenave F."/>
            <person name="Robert C."/>
            <person name="Cruaud C."/>
            <person name="Bruels T."/>
            <person name="Jaillon O."/>
            <person name="Friedlander L."/>
            <person name="Samson G."/>
            <person name="Brottier P."/>
            <person name="Cure S."/>
            <person name="Segurens B."/>
            <person name="Aniere F."/>
            <person name="Samain S."/>
            <person name="Crespeau H."/>
            <person name="Abbasi N."/>
            <person name="Aiach N."/>
            <person name="Boscus D."/>
            <person name="Dickhoff R."/>
            <person name="Dors M."/>
            <person name="Dubois I."/>
            <person name="Friedman C."/>
            <person name="Gouyvenoux M."/>
            <person name="James R."/>
            <person name="Madan A."/>
            <person name="Mairey-Estrada B."/>
            <person name="Mangenot S."/>
            <person name="Martins N."/>
            <person name="Menard M."/>
            <person name="Oztas S."/>
            <person name="Ratcliffe A."/>
            <person name="Shaffer T."/>
            <person name="Trask B."/>
            <person name="Vacherie B."/>
            <person name="Bellemere C."/>
            <person name="Belser C."/>
            <person name="Besnard-Gonnet M."/>
            <person name="Bartol-Mavel D."/>
            <person name="Boutard M."/>
            <person name="Briez-Silla S."/>
            <person name="Combette S."/>
            <person name="Dufosse-Laurent V."/>
            <person name="Ferron C."/>
            <person name="Lechaplais C."/>
            <person name="Louesse C."/>
            <person name="Muselet D."/>
            <person name="Magdelenat G."/>
            <person name="Pateau E."/>
            <person name="Petit E."/>
            <person name="Sirvain-Trukniewicz P."/>
            <person name="Trybou A."/>
            <person name="Vega-Czarny N."/>
            <person name="Bataille E."/>
            <person name="Bluet E."/>
            <person name="Bordelais I."/>
            <person name="Dubois M."/>
            <person name="Dumont C."/>
            <person name="Guerin T."/>
            <person name="Haffray S."/>
            <person name="Hammadi R."/>
            <person name="Muanga J."/>
            <person name="Pellouin V."/>
            <person name="Robert D."/>
            <person name="Wunderle E."/>
            <person name="Gauguet G."/>
            <person name="Roy A."/>
            <person name="Sainte-Marthe L."/>
            <person name="Verdier J."/>
            <person name="Verdier-Discala C."/>
            <person name="Hillier L.W."/>
            <person name="Fulton L."/>
            <person name="McPherson J."/>
            <person name="Matsuda F."/>
            <person name="Wilson R."/>
            <person name="Scarpelli C."/>
            <person name="Gyapay G."/>
            <person name="Wincker P."/>
            <person name="Saurin W."/>
            <person name="Quetier F."/>
            <person name="Waterston R."/>
            <person name="Hood L."/>
            <person name="Weissenbach J."/>
        </authorList>
    </citation>
    <scope>NUCLEOTIDE SEQUENCE [LARGE SCALE GENOMIC DNA]</scope>
</reference>
<reference key="3">
    <citation type="submission" date="2005-09" db="EMBL/GenBank/DDBJ databases">
        <authorList>
            <person name="Mural R.J."/>
            <person name="Istrail S."/>
            <person name="Sutton G.G."/>
            <person name="Florea L."/>
            <person name="Halpern A.L."/>
            <person name="Mobarry C.M."/>
            <person name="Lippert R."/>
            <person name="Walenz B."/>
            <person name="Shatkay H."/>
            <person name="Dew I."/>
            <person name="Miller J.R."/>
            <person name="Flanigan M.J."/>
            <person name="Edwards N.J."/>
            <person name="Bolanos R."/>
            <person name="Fasulo D."/>
            <person name="Halldorsson B.V."/>
            <person name="Hannenhalli S."/>
            <person name="Turner R."/>
            <person name="Yooseph S."/>
            <person name="Lu F."/>
            <person name="Nusskern D.R."/>
            <person name="Shue B.C."/>
            <person name="Zheng X.H."/>
            <person name="Zhong F."/>
            <person name="Delcher A.L."/>
            <person name="Huson D.H."/>
            <person name="Kravitz S.A."/>
            <person name="Mouchard L."/>
            <person name="Reinert K."/>
            <person name="Remington K.A."/>
            <person name="Clark A.G."/>
            <person name="Waterman M.S."/>
            <person name="Eichler E.E."/>
            <person name="Adams M.D."/>
            <person name="Hunkapiller M.W."/>
            <person name="Myers E.W."/>
            <person name="Venter J.C."/>
        </authorList>
    </citation>
    <scope>NUCLEOTIDE SEQUENCE [LARGE SCALE GENOMIC DNA]</scope>
</reference>
<proteinExistence type="evidence at transcript level"/>
<keyword id="KW-1185">Reference proteome</keyword>
<feature type="chain" id="PRO_0000392547" description="Putative uncharacterized protein encoded by LINC01599">
    <location>
        <begin position="1"/>
        <end position="324"/>
    </location>
</feature>
<sequence>MEVLGFSNSKMDVRAKRQLEIWMEMAPSKPEPQGKAQQSQPTSVLSAANAAQRGKCCCCREGHSPEDYGRQWAENVENHPEVAAHTSCLQSITPHFIAGEMGCTAKESQEQVPASITQILRNPWFSRLDSPRSRCLHLASSVDPIPGLQFFIVIVSDHQKVDREEEWKQGKIRKEIHWIPLFTMWSWLQCVEDRSIAGIPKLEHGDSHQTESLLDVLVGGFWGVPHTAPPRLQEAGGPTGGCGVGGQPLGGRGQWVGEETGPVGGPHAWWVPPTAPGTSLVLLVLLAQPFQSSEWMPVSSHTPPGTQTNTAALLNVCTSYSEYV</sequence>
<dbReference type="EMBL" id="AF390030">
    <property type="protein sequence ID" value="AAL58840.1"/>
    <property type="molecule type" value="mRNA"/>
</dbReference>
<dbReference type="EMBL" id="AL109758">
    <property type="status" value="NOT_ANNOTATED_CDS"/>
    <property type="molecule type" value="Genomic_DNA"/>
</dbReference>
<dbReference type="EMBL" id="CH471078">
    <property type="protein sequence ID" value="EAW65734.1"/>
    <property type="molecule type" value="Genomic_DNA"/>
</dbReference>
<dbReference type="BioGRID" id="128230">
    <property type="interactions" value="3"/>
</dbReference>
<dbReference type="GlyGen" id="Q8WXQ3">
    <property type="glycosylation" value="2 sites"/>
</dbReference>
<dbReference type="BioMuta" id="HGNC:27285"/>
<dbReference type="DMDM" id="74716321"/>
<dbReference type="jPOST" id="Q8WXQ3"/>
<dbReference type="PaxDb" id="9606-ENSP00000303234"/>
<dbReference type="UCSC" id="uc010tqk.2">
    <property type="organism name" value="human"/>
</dbReference>
<dbReference type="AGR" id="HGNC:27285"/>
<dbReference type="GeneCards" id="LINC01599"/>
<dbReference type="HGNC" id="HGNC:27285">
    <property type="gene designation" value="LINC01599"/>
</dbReference>
<dbReference type="neXtProt" id="NX_Q8WXQ3"/>
<dbReference type="eggNOG" id="ENOG502TDE5">
    <property type="taxonomic scope" value="Eukaryota"/>
</dbReference>
<dbReference type="InParanoid" id="Q8WXQ3"/>
<dbReference type="PAN-GO" id="Q8WXQ3">
    <property type="GO annotations" value="0 GO annotations based on evolutionary models"/>
</dbReference>
<dbReference type="PhylomeDB" id="Q8WXQ3"/>
<dbReference type="TreeFam" id="TF340705"/>
<dbReference type="PathwayCommons" id="Q8WXQ3"/>
<dbReference type="ChiTaRS" id="LINC01599">
    <property type="organism name" value="human"/>
</dbReference>
<dbReference type="Pharos" id="Q8WXQ3">
    <property type="development level" value="Tdark"/>
</dbReference>
<dbReference type="PRO" id="PR:Q8WXQ3"/>
<dbReference type="Proteomes" id="UP000005640">
    <property type="component" value="Unplaced"/>
</dbReference>
<dbReference type="RNAct" id="Q8WXQ3">
    <property type="molecule type" value="protein"/>
</dbReference>
<name>CN183_HUMAN</name>
<gene>
    <name evidence="1" type="primary">LINC01599</name>
    <name evidence="1" type="synonym">C14orf183</name>
</gene>